<sequence>MKITILTVGKLKEKYWKQAIAEYEKRLSAYSKIEIIEVPDEKAPENMSDKEVEQVKEKEGQRLLAKVKQQSTVITLEIKGNMLTSEGLAKEIESRMTRGQSDFTFIIGGSNGLHKDVLDRSDYALSFSKMTFPHQMMRVILIEQVYRAFKIMRGEAYHK</sequence>
<protein>
    <recommendedName>
        <fullName evidence="1">Ribosomal RNA large subunit methyltransferase H</fullName>
        <ecNumber evidence="1">2.1.1.177</ecNumber>
    </recommendedName>
    <alternativeName>
        <fullName evidence="1">23S rRNA (pseudouridine1915-N3)-methyltransferase</fullName>
    </alternativeName>
    <alternativeName>
        <fullName evidence="1">23S rRNA m3Psi1915 methyltransferase</fullName>
    </alternativeName>
    <alternativeName>
        <fullName evidence="1">rRNA (pseudouridine-N3-)-methyltransferase RlmH</fullName>
    </alternativeName>
</protein>
<feature type="chain" id="PRO_0000260616" description="Ribosomal RNA large subunit methyltransferase H">
    <location>
        <begin position="1"/>
        <end position="159"/>
    </location>
</feature>
<feature type="binding site" evidence="1">
    <location>
        <position position="76"/>
    </location>
    <ligand>
        <name>S-adenosyl-L-methionine</name>
        <dbReference type="ChEBI" id="CHEBI:59789"/>
    </ligand>
</feature>
<feature type="binding site" evidence="1">
    <location>
        <position position="108"/>
    </location>
    <ligand>
        <name>S-adenosyl-L-methionine</name>
        <dbReference type="ChEBI" id="CHEBI:59789"/>
    </ligand>
</feature>
<feature type="binding site" evidence="1">
    <location>
        <begin position="127"/>
        <end position="132"/>
    </location>
    <ligand>
        <name>S-adenosyl-L-methionine</name>
        <dbReference type="ChEBI" id="CHEBI:59789"/>
    </ligand>
</feature>
<name>RLMH_STAS1</name>
<comment type="function">
    <text evidence="1">Specifically methylates the pseudouridine at position 1915 (m3Psi1915) in 23S rRNA.</text>
</comment>
<comment type="catalytic activity">
    <reaction evidence="1">
        <text>pseudouridine(1915) in 23S rRNA + S-adenosyl-L-methionine = N(3)-methylpseudouridine(1915) in 23S rRNA + S-adenosyl-L-homocysteine + H(+)</text>
        <dbReference type="Rhea" id="RHEA:42752"/>
        <dbReference type="Rhea" id="RHEA-COMP:10221"/>
        <dbReference type="Rhea" id="RHEA-COMP:10222"/>
        <dbReference type="ChEBI" id="CHEBI:15378"/>
        <dbReference type="ChEBI" id="CHEBI:57856"/>
        <dbReference type="ChEBI" id="CHEBI:59789"/>
        <dbReference type="ChEBI" id="CHEBI:65314"/>
        <dbReference type="ChEBI" id="CHEBI:74486"/>
        <dbReference type="EC" id="2.1.1.177"/>
    </reaction>
</comment>
<comment type="subunit">
    <text evidence="1">Homodimer.</text>
</comment>
<comment type="subcellular location">
    <subcellularLocation>
        <location evidence="1">Cytoplasm</location>
    </subcellularLocation>
</comment>
<comment type="similarity">
    <text evidence="1">Belongs to the RNA methyltransferase RlmH family.</text>
</comment>
<accession>Q4A155</accession>
<evidence type="ECO:0000255" key="1">
    <source>
        <dbReference type="HAMAP-Rule" id="MF_00658"/>
    </source>
</evidence>
<keyword id="KW-0963">Cytoplasm</keyword>
<keyword id="KW-0489">Methyltransferase</keyword>
<keyword id="KW-1185">Reference proteome</keyword>
<keyword id="KW-0698">rRNA processing</keyword>
<keyword id="KW-0949">S-adenosyl-L-methionine</keyword>
<keyword id="KW-0808">Transferase</keyword>
<gene>
    <name evidence="1" type="primary">rlmH</name>
    <name type="ordered locus">SSP0026</name>
</gene>
<proteinExistence type="inferred from homology"/>
<dbReference type="EC" id="2.1.1.177" evidence="1"/>
<dbReference type="EMBL" id="AP008934">
    <property type="protein sequence ID" value="BAE17171.1"/>
    <property type="molecule type" value="Genomic_DNA"/>
</dbReference>
<dbReference type="RefSeq" id="WP_011302030.1">
    <property type="nucleotide sequence ID" value="NZ_MTGA01000035.1"/>
</dbReference>
<dbReference type="SMR" id="Q4A155"/>
<dbReference type="GeneID" id="3615252"/>
<dbReference type="KEGG" id="ssp:SSP0026"/>
<dbReference type="PATRIC" id="fig|342451.11.peg.27"/>
<dbReference type="eggNOG" id="COG1576">
    <property type="taxonomic scope" value="Bacteria"/>
</dbReference>
<dbReference type="HOGENOM" id="CLU_100552_0_0_9"/>
<dbReference type="OrthoDB" id="9806643at2"/>
<dbReference type="Proteomes" id="UP000006371">
    <property type="component" value="Chromosome"/>
</dbReference>
<dbReference type="GO" id="GO:0005737">
    <property type="term" value="C:cytoplasm"/>
    <property type="evidence" value="ECO:0007669"/>
    <property type="project" value="UniProtKB-SubCell"/>
</dbReference>
<dbReference type="GO" id="GO:0070038">
    <property type="term" value="F:rRNA (pseudouridine-N3-)-methyltransferase activity"/>
    <property type="evidence" value="ECO:0007669"/>
    <property type="project" value="UniProtKB-UniRule"/>
</dbReference>
<dbReference type="CDD" id="cd18081">
    <property type="entry name" value="RlmH-like"/>
    <property type="match status" value="1"/>
</dbReference>
<dbReference type="Gene3D" id="3.40.1280.10">
    <property type="match status" value="1"/>
</dbReference>
<dbReference type="HAMAP" id="MF_00658">
    <property type="entry name" value="23SrRNA_methyltr_H"/>
    <property type="match status" value="1"/>
</dbReference>
<dbReference type="InterPro" id="IPR029028">
    <property type="entry name" value="Alpha/beta_knot_MTases"/>
</dbReference>
<dbReference type="InterPro" id="IPR003742">
    <property type="entry name" value="RlmH-like"/>
</dbReference>
<dbReference type="InterPro" id="IPR029026">
    <property type="entry name" value="tRNA_m1G_MTases_N"/>
</dbReference>
<dbReference type="NCBIfam" id="NF000985">
    <property type="entry name" value="PRK00103.1-3"/>
    <property type="match status" value="1"/>
</dbReference>
<dbReference type="NCBIfam" id="TIGR00246">
    <property type="entry name" value="tRNA_RlmH_YbeA"/>
    <property type="match status" value="1"/>
</dbReference>
<dbReference type="PANTHER" id="PTHR33603">
    <property type="entry name" value="METHYLTRANSFERASE"/>
    <property type="match status" value="1"/>
</dbReference>
<dbReference type="PANTHER" id="PTHR33603:SF1">
    <property type="entry name" value="RIBOSOMAL RNA LARGE SUBUNIT METHYLTRANSFERASE H"/>
    <property type="match status" value="1"/>
</dbReference>
<dbReference type="Pfam" id="PF02590">
    <property type="entry name" value="SPOUT_MTase"/>
    <property type="match status" value="1"/>
</dbReference>
<dbReference type="PIRSF" id="PIRSF004505">
    <property type="entry name" value="MT_bac"/>
    <property type="match status" value="1"/>
</dbReference>
<dbReference type="SUPFAM" id="SSF75217">
    <property type="entry name" value="alpha/beta knot"/>
    <property type="match status" value="1"/>
</dbReference>
<reference key="1">
    <citation type="journal article" date="2005" name="Proc. Natl. Acad. Sci. U.S.A.">
        <title>Whole genome sequence of Staphylococcus saprophyticus reveals the pathogenesis of uncomplicated urinary tract infection.</title>
        <authorList>
            <person name="Kuroda M."/>
            <person name="Yamashita A."/>
            <person name="Hirakawa H."/>
            <person name="Kumano M."/>
            <person name="Morikawa K."/>
            <person name="Higashide M."/>
            <person name="Maruyama A."/>
            <person name="Inose Y."/>
            <person name="Matoba K."/>
            <person name="Toh H."/>
            <person name="Kuhara S."/>
            <person name="Hattori M."/>
            <person name="Ohta T."/>
        </authorList>
    </citation>
    <scope>NUCLEOTIDE SEQUENCE [LARGE SCALE GENOMIC DNA]</scope>
    <source>
        <strain>ATCC 15305 / DSM 20229 / NCIMB 8711 / NCTC 7292 / S-41</strain>
    </source>
</reference>
<organism>
    <name type="scientific">Staphylococcus saprophyticus subsp. saprophyticus (strain ATCC 15305 / DSM 20229 / NCIMB 8711 / NCTC 7292 / S-41)</name>
    <dbReference type="NCBI Taxonomy" id="342451"/>
    <lineage>
        <taxon>Bacteria</taxon>
        <taxon>Bacillati</taxon>
        <taxon>Bacillota</taxon>
        <taxon>Bacilli</taxon>
        <taxon>Bacillales</taxon>
        <taxon>Staphylococcaceae</taxon>
        <taxon>Staphylococcus</taxon>
    </lineage>
</organism>